<sequence length="201" mass="22385">MALHDENVVWHSHPVTVAAREQLHGHRGVVLWFTGLSGSGKSTVAGALEEALHQRGVSTYLLDGDNVRHGLCRDLGFSDADRQENIRRVGEVASLMADAGLIVLTAFISPHRAERQLVKERVGHDRFIEIYVNTPLAICEQRDPKGLYKKARAGELRNFTGIDAIYEAPDSPQVHLNGEQLVTNLVSQLLDLLRRRDIIRS</sequence>
<organism>
    <name type="scientific">Salmonella typhi</name>
    <dbReference type="NCBI Taxonomy" id="90370"/>
    <lineage>
        <taxon>Bacteria</taxon>
        <taxon>Pseudomonadati</taxon>
        <taxon>Pseudomonadota</taxon>
        <taxon>Gammaproteobacteria</taxon>
        <taxon>Enterobacterales</taxon>
        <taxon>Enterobacteriaceae</taxon>
        <taxon>Salmonella</taxon>
    </lineage>
</organism>
<name>CYSC_SALTI</name>
<keyword id="KW-0067">ATP-binding</keyword>
<keyword id="KW-0418">Kinase</keyword>
<keyword id="KW-0547">Nucleotide-binding</keyword>
<keyword id="KW-0597">Phosphoprotein</keyword>
<keyword id="KW-0808">Transferase</keyword>
<protein>
    <recommendedName>
        <fullName evidence="2">Adenylyl-sulfate kinase</fullName>
        <ecNumber evidence="2">2.7.1.25</ecNumber>
    </recommendedName>
    <alternativeName>
        <fullName evidence="2">APS kinase</fullName>
    </alternativeName>
    <alternativeName>
        <fullName evidence="2">ATP adenosine-5'-phosphosulfate 3'-phosphotransferase</fullName>
    </alternativeName>
    <alternativeName>
        <fullName evidence="2">Adenosine-5'-phosphosulfate kinase</fullName>
    </alternativeName>
</protein>
<feature type="initiator methionine" description="Removed" evidence="1">
    <location>
        <position position="1"/>
    </location>
</feature>
<feature type="chain" id="PRO_0000105917" description="Adenylyl-sulfate kinase">
    <location>
        <begin position="2"/>
        <end position="201"/>
    </location>
</feature>
<feature type="active site" description="Phosphoserine intermediate" evidence="2">
    <location>
        <position position="109"/>
    </location>
</feature>
<feature type="binding site" evidence="2">
    <location>
        <begin position="35"/>
        <end position="42"/>
    </location>
    <ligand>
        <name>ATP</name>
        <dbReference type="ChEBI" id="CHEBI:30616"/>
    </ligand>
</feature>
<gene>
    <name evidence="2" type="primary">cysC</name>
    <name type="ordered locus">STY3058</name>
    <name type="ordered locus">t2834</name>
</gene>
<dbReference type="EC" id="2.7.1.25" evidence="2"/>
<dbReference type="EMBL" id="AL513382">
    <property type="protein sequence ID" value="CAD06039.1"/>
    <property type="molecule type" value="Genomic_DNA"/>
</dbReference>
<dbReference type="EMBL" id="AE014613">
    <property type="protein sequence ID" value="AAO70391.1"/>
    <property type="molecule type" value="Genomic_DNA"/>
</dbReference>
<dbReference type="RefSeq" id="NP_457322.1">
    <property type="nucleotide sequence ID" value="NC_003198.1"/>
</dbReference>
<dbReference type="RefSeq" id="WP_001173663.1">
    <property type="nucleotide sequence ID" value="NZ_WSUR01000005.1"/>
</dbReference>
<dbReference type="SMR" id="P63890"/>
<dbReference type="STRING" id="220341.gene:17586949"/>
<dbReference type="KEGG" id="stt:t2834"/>
<dbReference type="KEGG" id="sty:STY3058"/>
<dbReference type="PATRIC" id="fig|220341.7.peg.3111"/>
<dbReference type="eggNOG" id="COG0529">
    <property type="taxonomic scope" value="Bacteria"/>
</dbReference>
<dbReference type="HOGENOM" id="CLU_046932_1_0_6"/>
<dbReference type="OMA" id="HENTVEE"/>
<dbReference type="OrthoDB" id="9804504at2"/>
<dbReference type="UniPathway" id="UPA00140">
    <property type="reaction ID" value="UER00205"/>
</dbReference>
<dbReference type="Proteomes" id="UP000000541">
    <property type="component" value="Chromosome"/>
</dbReference>
<dbReference type="Proteomes" id="UP000002670">
    <property type="component" value="Chromosome"/>
</dbReference>
<dbReference type="GO" id="GO:0004020">
    <property type="term" value="F:adenylylsulfate kinase activity"/>
    <property type="evidence" value="ECO:0007669"/>
    <property type="project" value="UniProtKB-UniRule"/>
</dbReference>
<dbReference type="GO" id="GO:0005524">
    <property type="term" value="F:ATP binding"/>
    <property type="evidence" value="ECO:0007669"/>
    <property type="project" value="UniProtKB-UniRule"/>
</dbReference>
<dbReference type="GO" id="GO:0070814">
    <property type="term" value="P:hydrogen sulfide biosynthetic process"/>
    <property type="evidence" value="ECO:0007669"/>
    <property type="project" value="UniProtKB-UniRule"/>
</dbReference>
<dbReference type="GO" id="GO:0000103">
    <property type="term" value="P:sulfate assimilation"/>
    <property type="evidence" value="ECO:0007669"/>
    <property type="project" value="UniProtKB-UniRule"/>
</dbReference>
<dbReference type="CDD" id="cd02027">
    <property type="entry name" value="APSK"/>
    <property type="match status" value="1"/>
</dbReference>
<dbReference type="FunFam" id="3.40.50.300:FF:000212">
    <property type="entry name" value="Adenylyl-sulfate kinase"/>
    <property type="match status" value="1"/>
</dbReference>
<dbReference type="Gene3D" id="3.40.50.300">
    <property type="entry name" value="P-loop containing nucleotide triphosphate hydrolases"/>
    <property type="match status" value="1"/>
</dbReference>
<dbReference type="HAMAP" id="MF_00065">
    <property type="entry name" value="Adenylyl_sulf_kinase"/>
    <property type="match status" value="1"/>
</dbReference>
<dbReference type="InterPro" id="IPR002891">
    <property type="entry name" value="APS_kinase"/>
</dbReference>
<dbReference type="InterPro" id="IPR027417">
    <property type="entry name" value="P-loop_NTPase"/>
</dbReference>
<dbReference type="NCBIfam" id="TIGR00455">
    <property type="entry name" value="apsK"/>
    <property type="match status" value="1"/>
</dbReference>
<dbReference type="NCBIfam" id="NF003013">
    <property type="entry name" value="PRK03846.1"/>
    <property type="match status" value="1"/>
</dbReference>
<dbReference type="PANTHER" id="PTHR11055:SF63">
    <property type="entry name" value="ADENYLYL-SULFATE KINASE 1, CHLOROPLASTIC"/>
    <property type="match status" value="1"/>
</dbReference>
<dbReference type="PANTHER" id="PTHR11055">
    <property type="entry name" value="BIFUNCTIONAL 3'-PHOSPHOADENOSINE 5'-PHOSPHOSULFATE SYNTHASE"/>
    <property type="match status" value="1"/>
</dbReference>
<dbReference type="Pfam" id="PF01583">
    <property type="entry name" value="APS_kinase"/>
    <property type="match status" value="1"/>
</dbReference>
<dbReference type="SUPFAM" id="SSF52540">
    <property type="entry name" value="P-loop containing nucleoside triphosphate hydrolases"/>
    <property type="match status" value="1"/>
</dbReference>
<proteinExistence type="inferred from homology"/>
<evidence type="ECO:0000250" key="1"/>
<evidence type="ECO:0000255" key="2">
    <source>
        <dbReference type="HAMAP-Rule" id="MF_00065"/>
    </source>
</evidence>
<reference key="1">
    <citation type="journal article" date="2001" name="Nature">
        <title>Complete genome sequence of a multiple drug resistant Salmonella enterica serovar Typhi CT18.</title>
        <authorList>
            <person name="Parkhill J."/>
            <person name="Dougan G."/>
            <person name="James K.D."/>
            <person name="Thomson N.R."/>
            <person name="Pickard D."/>
            <person name="Wain J."/>
            <person name="Churcher C.M."/>
            <person name="Mungall K.L."/>
            <person name="Bentley S.D."/>
            <person name="Holden M.T.G."/>
            <person name="Sebaihia M."/>
            <person name="Baker S."/>
            <person name="Basham D."/>
            <person name="Brooks K."/>
            <person name="Chillingworth T."/>
            <person name="Connerton P."/>
            <person name="Cronin A."/>
            <person name="Davis P."/>
            <person name="Davies R.M."/>
            <person name="Dowd L."/>
            <person name="White N."/>
            <person name="Farrar J."/>
            <person name="Feltwell T."/>
            <person name="Hamlin N."/>
            <person name="Haque A."/>
            <person name="Hien T.T."/>
            <person name="Holroyd S."/>
            <person name="Jagels K."/>
            <person name="Krogh A."/>
            <person name="Larsen T.S."/>
            <person name="Leather S."/>
            <person name="Moule S."/>
            <person name="O'Gaora P."/>
            <person name="Parry C."/>
            <person name="Quail M.A."/>
            <person name="Rutherford K.M."/>
            <person name="Simmonds M."/>
            <person name="Skelton J."/>
            <person name="Stevens K."/>
            <person name="Whitehead S."/>
            <person name="Barrell B.G."/>
        </authorList>
    </citation>
    <scope>NUCLEOTIDE SEQUENCE [LARGE SCALE GENOMIC DNA]</scope>
    <source>
        <strain>CT18</strain>
    </source>
</reference>
<reference key="2">
    <citation type="journal article" date="2003" name="J. Bacteriol.">
        <title>Comparative genomics of Salmonella enterica serovar Typhi strains Ty2 and CT18.</title>
        <authorList>
            <person name="Deng W."/>
            <person name="Liou S.-R."/>
            <person name="Plunkett G. III"/>
            <person name="Mayhew G.F."/>
            <person name="Rose D.J."/>
            <person name="Burland V."/>
            <person name="Kodoyianni V."/>
            <person name="Schwartz D.C."/>
            <person name="Blattner F.R."/>
        </authorList>
    </citation>
    <scope>NUCLEOTIDE SEQUENCE [LARGE SCALE GENOMIC DNA]</scope>
    <source>
        <strain>ATCC 700931 / Ty2</strain>
    </source>
</reference>
<comment type="function">
    <text evidence="2">Catalyzes the synthesis of activated sulfate.</text>
</comment>
<comment type="catalytic activity">
    <reaction evidence="2">
        <text>adenosine 5'-phosphosulfate + ATP = 3'-phosphoadenylyl sulfate + ADP + H(+)</text>
        <dbReference type="Rhea" id="RHEA:24152"/>
        <dbReference type="ChEBI" id="CHEBI:15378"/>
        <dbReference type="ChEBI" id="CHEBI:30616"/>
        <dbReference type="ChEBI" id="CHEBI:58243"/>
        <dbReference type="ChEBI" id="CHEBI:58339"/>
        <dbReference type="ChEBI" id="CHEBI:456216"/>
        <dbReference type="EC" id="2.7.1.25"/>
    </reaction>
</comment>
<comment type="pathway">
    <text evidence="2">Sulfur metabolism; hydrogen sulfide biosynthesis; sulfite from sulfate: step 2/3.</text>
</comment>
<comment type="similarity">
    <text evidence="2">Belongs to the APS kinase family.</text>
</comment>
<accession>P63890</accession>
<accession>Q8XF34</accession>